<name>CYSB_BURCJ</name>
<proteinExistence type="evidence at protein level"/>
<evidence type="ECO:0000255" key="1">
    <source>
        <dbReference type="PROSITE-ProRule" id="PRU00253"/>
    </source>
</evidence>
<evidence type="ECO:0000269" key="2">
    <source>
    </source>
</evidence>
<evidence type="ECO:0000303" key="3">
    <source>
    </source>
</evidence>
<evidence type="ECO:0000305" key="4"/>
<evidence type="ECO:0000312" key="5">
    <source>
        <dbReference type="EMBL" id="CAR52987.1"/>
    </source>
</evidence>
<accession>B4E8V9</accession>
<reference key="1">
    <citation type="journal article" date="2009" name="J. Bacteriol.">
        <title>The genome of Burkholderia cenocepacia J2315, an epidemic pathogen of cystic fibrosis patients.</title>
        <authorList>
            <person name="Holden M.T."/>
            <person name="Seth-Smith H.M."/>
            <person name="Crossman L.C."/>
            <person name="Sebaihia M."/>
            <person name="Bentley S.D."/>
            <person name="Cerdeno-Tarraga A.M."/>
            <person name="Thomson N.R."/>
            <person name="Bason N."/>
            <person name="Quail M.A."/>
            <person name="Sharp S."/>
            <person name="Cherevach I."/>
            <person name="Churcher C."/>
            <person name="Goodhead I."/>
            <person name="Hauser H."/>
            <person name="Holroyd N."/>
            <person name="Mungall K."/>
            <person name="Scott P."/>
            <person name="Walker D."/>
            <person name="White B."/>
            <person name="Rose H."/>
            <person name="Iversen P."/>
            <person name="Mil-Homens D."/>
            <person name="Rocha E.P."/>
            <person name="Fialho A.M."/>
            <person name="Baldwin A."/>
            <person name="Dowson C."/>
            <person name="Barrell B.G."/>
            <person name="Govan J.R."/>
            <person name="Vandamme P."/>
            <person name="Hart C.A."/>
            <person name="Mahenthiralingam E."/>
            <person name="Parkhill J."/>
        </authorList>
    </citation>
    <scope>NUCLEOTIDE SEQUENCE [LARGE SCALE GENOMIC DNA]</scope>
    <source>
        <strain>ATCC BAA-245 / DSM 16553 / LMG 16656 / NCTC 13227 / J2315 / CF5610</strain>
    </source>
</reference>
<reference key="2">
    <citation type="journal article" date="2007" name="J. Bacteriol.">
        <title>Regulation of sulfur assimilation pathways in Burkholderia cenocepacia: identification of transcription factors CysB and SsuR and their role in control of target genes.</title>
        <authorList>
            <person name="Iwanicka-Nowicka R."/>
            <person name="Zielak A."/>
            <person name="Cook A.M."/>
            <person name="Thomas M.S."/>
            <person name="Hryniewicz M.M."/>
        </authorList>
    </citation>
    <scope>FUNCTION</scope>
    <scope>DNA-BINDING</scope>
    <scope>INDUCTION</scope>
    <scope>DISRUPTION PHENOTYPE</scope>
    <source>
        <strain>715j</strain>
    </source>
</reference>
<organism>
    <name type="scientific">Burkholderia cenocepacia (strain ATCC BAA-245 / DSM 16553 / LMG 16656 / NCTC 13227 / J2315 / CF5610)</name>
    <name type="common">Burkholderia cepacia (strain J2315)</name>
    <dbReference type="NCBI Taxonomy" id="216591"/>
    <lineage>
        <taxon>Bacteria</taxon>
        <taxon>Pseudomonadati</taxon>
        <taxon>Pseudomonadota</taxon>
        <taxon>Betaproteobacteria</taxon>
        <taxon>Burkholderiales</taxon>
        <taxon>Burkholderiaceae</taxon>
        <taxon>Burkholderia</taxon>
        <taxon>Burkholderia cepacia complex</taxon>
    </lineage>
</organism>
<gene>
    <name evidence="3" type="primary">cysB</name>
    <name evidence="4" type="ordered locus">BceJ2315_26250</name>
    <name evidence="5" type="ORF">BCAL2686</name>
</gene>
<protein>
    <recommendedName>
        <fullName evidence="4">HTH-type transcriptional regulator CysB</fullName>
    </recommendedName>
</protein>
<feature type="chain" id="PRO_0000445022" description="HTH-type transcriptional regulator CysB">
    <location>
        <begin position="1"/>
        <end position="313"/>
    </location>
</feature>
<feature type="domain" description="HTH lysR-type" evidence="1">
    <location>
        <begin position="1"/>
        <end position="59"/>
    </location>
</feature>
<feature type="DNA-binding region" description="H-T-H motif" evidence="1">
    <location>
        <begin position="19"/>
        <end position="38"/>
    </location>
</feature>
<sequence>MNLHQFRFVREAVRQNFNLTEAAKALYTSQPGVSKAIIELEDELGVEIFTRHGKRVRSLTEPGRIILASVERILQEVESLKRVGKDYAAQDQGNLTIAATHTQARYSLPAAIAEFKKRFPKVHLSILQGSPTQVAEMVIHDQADLAIATEAISDYKELVSLPCFQWHHAAVVPADHPLLERKPVTLDDLAQYPLITYDDAFAGRKKINHAFALRGLSPDIVLEAIDADVIKTYVELGLGVGIMADIAFNPERDRGLRLIPVGHLFGSNVTRVALKQGAYLRSYVYTLVELLSPTLNRKLIEQALKGEAESYEL</sequence>
<dbReference type="EMBL" id="AM747720">
    <property type="protein sequence ID" value="CAR52987.1"/>
    <property type="molecule type" value="Genomic_DNA"/>
</dbReference>
<dbReference type="RefSeq" id="WP_006478072.1">
    <property type="nucleotide sequence ID" value="NC_011000.1"/>
</dbReference>
<dbReference type="SMR" id="B4E8V9"/>
<dbReference type="KEGG" id="bcj:BCAL2686"/>
<dbReference type="eggNOG" id="COG0583">
    <property type="taxonomic scope" value="Bacteria"/>
</dbReference>
<dbReference type="HOGENOM" id="CLU_039613_6_2_4"/>
<dbReference type="BioCyc" id="BCEN216591:G1G1V-2974-MONOMER"/>
<dbReference type="Proteomes" id="UP000001035">
    <property type="component" value="Chromosome 1"/>
</dbReference>
<dbReference type="GO" id="GO:0003700">
    <property type="term" value="F:DNA-binding transcription factor activity"/>
    <property type="evidence" value="ECO:0007669"/>
    <property type="project" value="InterPro"/>
</dbReference>
<dbReference type="GO" id="GO:0000976">
    <property type="term" value="F:transcription cis-regulatory region binding"/>
    <property type="evidence" value="ECO:0007669"/>
    <property type="project" value="TreeGrafter"/>
</dbReference>
<dbReference type="GO" id="GO:0019344">
    <property type="term" value="P:cysteine biosynthetic process"/>
    <property type="evidence" value="ECO:0007669"/>
    <property type="project" value="TreeGrafter"/>
</dbReference>
<dbReference type="CDD" id="cd08413">
    <property type="entry name" value="PBP2_CysB_like"/>
    <property type="match status" value="1"/>
</dbReference>
<dbReference type="Gene3D" id="3.40.190.10">
    <property type="entry name" value="Periplasmic binding protein-like II"/>
    <property type="match status" value="2"/>
</dbReference>
<dbReference type="Gene3D" id="1.10.10.10">
    <property type="entry name" value="Winged helix-like DNA-binding domain superfamily/Winged helix DNA-binding domain"/>
    <property type="match status" value="1"/>
</dbReference>
<dbReference type="InterPro" id="IPR037423">
    <property type="entry name" value="CysB_PBP2"/>
</dbReference>
<dbReference type="InterPro" id="IPR005119">
    <property type="entry name" value="LysR_subst-bd"/>
</dbReference>
<dbReference type="InterPro" id="IPR000847">
    <property type="entry name" value="Tscrpt_reg_HTH_LysR"/>
</dbReference>
<dbReference type="InterPro" id="IPR036388">
    <property type="entry name" value="WH-like_DNA-bd_sf"/>
</dbReference>
<dbReference type="InterPro" id="IPR036390">
    <property type="entry name" value="WH_DNA-bd_sf"/>
</dbReference>
<dbReference type="NCBIfam" id="NF009327">
    <property type="entry name" value="PRK12684.1"/>
    <property type="match status" value="1"/>
</dbReference>
<dbReference type="PANTHER" id="PTHR30126">
    <property type="entry name" value="HTH-TYPE TRANSCRIPTIONAL REGULATOR"/>
    <property type="match status" value="1"/>
</dbReference>
<dbReference type="PANTHER" id="PTHR30126:SF6">
    <property type="entry name" value="HTH-TYPE TRANSCRIPTIONAL REGULATOR CYSB-RELATED"/>
    <property type="match status" value="1"/>
</dbReference>
<dbReference type="Pfam" id="PF00126">
    <property type="entry name" value="HTH_1"/>
    <property type="match status" value="1"/>
</dbReference>
<dbReference type="Pfam" id="PF03466">
    <property type="entry name" value="LysR_substrate"/>
    <property type="match status" value="1"/>
</dbReference>
<dbReference type="PRINTS" id="PR00039">
    <property type="entry name" value="HTHLYSR"/>
</dbReference>
<dbReference type="SUPFAM" id="SSF53850">
    <property type="entry name" value="Periplasmic binding protein-like II"/>
    <property type="match status" value="1"/>
</dbReference>
<dbReference type="SUPFAM" id="SSF46785">
    <property type="entry name" value="Winged helix' DNA-binding domain"/>
    <property type="match status" value="1"/>
</dbReference>
<dbReference type="PROSITE" id="PS50931">
    <property type="entry name" value="HTH_LYSR"/>
    <property type="match status" value="1"/>
</dbReference>
<comment type="function">
    <text evidence="2">Transcriptional regulator preferentially involved in the control of sulfate transport and reduction. Binds to DNA at target promoter regions.</text>
</comment>
<comment type="induction">
    <text evidence="2">Negatively controlled by both CysB and SsuR.</text>
</comment>
<comment type="disruption phenotype">
    <text evidence="2">Mutant is not able to utilize sulfate, sulfite and ethanesulfonate for cysteine biosynthesis.</text>
</comment>
<comment type="similarity">
    <text evidence="4">Belongs to the LysR transcriptional regulatory family.</text>
</comment>
<keyword id="KW-0238">DNA-binding</keyword>
<keyword id="KW-0804">Transcription</keyword>
<keyword id="KW-0805">Transcription regulation</keyword>